<feature type="chain" id="PRO_0000353329" description="DNA-directed RNA polymerase subunit beta'">
    <location>
        <begin position="1"/>
        <end position="1178"/>
    </location>
</feature>
<feature type="binding site" evidence="1">
    <location>
        <position position="60"/>
    </location>
    <ligand>
        <name>Zn(2+)</name>
        <dbReference type="ChEBI" id="CHEBI:29105"/>
        <label>1</label>
    </ligand>
</feature>
<feature type="binding site" evidence="1">
    <location>
        <position position="62"/>
    </location>
    <ligand>
        <name>Zn(2+)</name>
        <dbReference type="ChEBI" id="CHEBI:29105"/>
        <label>1</label>
    </ligand>
</feature>
<feature type="binding site" evidence="1">
    <location>
        <position position="75"/>
    </location>
    <ligand>
        <name>Zn(2+)</name>
        <dbReference type="ChEBI" id="CHEBI:29105"/>
        <label>1</label>
    </ligand>
</feature>
<feature type="binding site" evidence="1">
    <location>
        <position position="78"/>
    </location>
    <ligand>
        <name>Zn(2+)</name>
        <dbReference type="ChEBI" id="CHEBI:29105"/>
        <label>1</label>
    </ligand>
</feature>
<feature type="binding site" evidence="1">
    <location>
        <position position="450"/>
    </location>
    <ligand>
        <name>Mg(2+)</name>
        <dbReference type="ChEBI" id="CHEBI:18420"/>
    </ligand>
</feature>
<feature type="binding site" evidence="1">
    <location>
        <position position="452"/>
    </location>
    <ligand>
        <name>Mg(2+)</name>
        <dbReference type="ChEBI" id="CHEBI:18420"/>
    </ligand>
</feature>
<feature type="binding site" evidence="1">
    <location>
        <position position="454"/>
    </location>
    <ligand>
        <name>Mg(2+)</name>
        <dbReference type="ChEBI" id="CHEBI:18420"/>
    </ligand>
</feature>
<feature type="binding site" evidence="1">
    <location>
        <position position="795"/>
    </location>
    <ligand>
        <name>Zn(2+)</name>
        <dbReference type="ChEBI" id="CHEBI:29105"/>
        <label>2</label>
    </ligand>
</feature>
<feature type="binding site" evidence="1">
    <location>
        <position position="869"/>
    </location>
    <ligand>
        <name>Zn(2+)</name>
        <dbReference type="ChEBI" id="CHEBI:29105"/>
        <label>2</label>
    </ligand>
</feature>
<feature type="binding site" evidence="1">
    <location>
        <position position="876"/>
    </location>
    <ligand>
        <name>Zn(2+)</name>
        <dbReference type="ChEBI" id="CHEBI:29105"/>
        <label>2</label>
    </ligand>
</feature>
<feature type="binding site" evidence="1">
    <location>
        <position position="879"/>
    </location>
    <ligand>
        <name>Zn(2+)</name>
        <dbReference type="ChEBI" id="CHEBI:29105"/>
        <label>2</label>
    </ligand>
</feature>
<proteinExistence type="inferred from homology"/>
<name>RPOC_CLOB1</name>
<reference key="1">
    <citation type="journal article" date="2007" name="PLoS ONE">
        <title>Analysis of the neurotoxin complex genes in Clostridium botulinum A1-A4 and B1 strains: BoNT/A3, /Ba4 and /B1 clusters are located within plasmids.</title>
        <authorList>
            <person name="Smith T.J."/>
            <person name="Hill K.K."/>
            <person name="Foley B.T."/>
            <person name="Detter J.C."/>
            <person name="Munk A.C."/>
            <person name="Bruce D.C."/>
            <person name="Doggett N.A."/>
            <person name="Smith L.A."/>
            <person name="Marks J.D."/>
            <person name="Xie G."/>
            <person name="Brettin T.S."/>
        </authorList>
    </citation>
    <scope>NUCLEOTIDE SEQUENCE [LARGE SCALE GENOMIC DNA]</scope>
    <source>
        <strain>ATCC 19397 / Type A</strain>
    </source>
</reference>
<sequence>MFELNNFDALQIGLASPEKIREWSRGEVKKPETINYRTLKPERDGLFCERIFGPMKDWECHCGKYKRIRYKGIVCDRCGVEVTKAKVRRERMGHIELAAPVSHIWYFKGIPSRMGLILDMSPRALEKVLYFASYVVLDPKETPLLKKQLLNEKEYRESIDKYGDDSFVAAMGAEAVKTLLDEIDLEQSSIELKEELKTSTGQKKIRIIRRLEVVESFRKSGNRPDWMVIDVIPVIPPDLRPMVQLDGGRFATSDLNDLYRRVINRNNRLKKLLDLGAPDIIVRNEKRMLQEAVDALIDNGRRGRPVTGPGNRPLKSLSDMLKGKQGRFRQNLLGKRVDYSGRSVIVVGPELKMYQCGLPKEMALELFKPFVMKKLVQNGLAHNIKSAKRMVERVQPQVWDVLEEVISDHPVLLNRAPTLHRLGIQAFQPVLVEGRAIKLHPLVCTAYNADFDGDQMAVHVPLSVEAQAEARFLMLAAHNILKPSDGKPVSVPTQDMVLGSYYLTMDKDGVKGEGKVFSCPEEVLMAYQCKAVDIHAKIKVRLKKVIDGETIEGIIETTPGKIIFNESIPQDLGYIDRTVPENKLKLEVDFLVSKKTLGGIINRCYMKHGATKTSIMLDKIKAKGYHYSTIGAITISTSDMVVPEAKRELLQNTEKQVEKIQKMYRRGFISEEERYEKVIDLWTKTTEDVANALMASLDSFNPIYMMADSGARGSKSQIKQLAGMRGLMANPSGKIIELPIKASFREGLDVLEYFISTHGARKGNADTALKTADSGYLTRRLVDVSQDVIVRQEDCGTEEGYEVSEIKEGNEVIEPLVERLSGRYPSEDIINPTTGEVIVKRNTYMNEDIAKKVSDAGIKKVKIRSVFTCKSKHGVCARCYGMNMATSQKIHIGEAVGIVAAQSIGEPGTQLTMRTFHTGGVAGADITQGLPRVEELFEARKPKGLAIVSEVSGTVKMEETKKKRTIIVVTDDGEEVSYDIPFGSRIKVKNGDIISAGDEITEGSINPHDILRIKGVDGVKNYLLSEVQKVYRLQGVDINDKHLEVVIRQMTRKIKIEDSGDTELLPGTMIDVFDFEEANREILEKGGEPAVGRIALLGITKAALATDSFLSAASFQETTRVLTDAAIKGKIDPLLGLKENVIIGKLIPAGTGMTRYRSIQINTDDENIEEDSMDSIEV</sequence>
<protein>
    <recommendedName>
        <fullName evidence="1">DNA-directed RNA polymerase subunit beta'</fullName>
        <shortName evidence="1">RNAP subunit beta'</shortName>
        <ecNumber evidence="1">2.7.7.6</ecNumber>
    </recommendedName>
    <alternativeName>
        <fullName evidence="1">RNA polymerase subunit beta'</fullName>
    </alternativeName>
    <alternativeName>
        <fullName evidence="1">Transcriptase subunit beta'</fullName>
    </alternativeName>
</protein>
<keyword id="KW-0240">DNA-directed RNA polymerase</keyword>
<keyword id="KW-0460">Magnesium</keyword>
<keyword id="KW-0479">Metal-binding</keyword>
<keyword id="KW-0548">Nucleotidyltransferase</keyword>
<keyword id="KW-0804">Transcription</keyword>
<keyword id="KW-0808">Transferase</keyword>
<keyword id="KW-0862">Zinc</keyword>
<evidence type="ECO:0000255" key="1">
    <source>
        <dbReference type="HAMAP-Rule" id="MF_01322"/>
    </source>
</evidence>
<gene>
    <name evidence="1" type="primary">rpoC</name>
    <name type="ordered locus">CLB_3544</name>
</gene>
<organism>
    <name type="scientific">Clostridium botulinum (strain ATCC 19397 / Type A)</name>
    <dbReference type="NCBI Taxonomy" id="441770"/>
    <lineage>
        <taxon>Bacteria</taxon>
        <taxon>Bacillati</taxon>
        <taxon>Bacillota</taxon>
        <taxon>Clostridia</taxon>
        <taxon>Eubacteriales</taxon>
        <taxon>Clostridiaceae</taxon>
        <taxon>Clostridium</taxon>
    </lineage>
</organism>
<comment type="function">
    <text evidence="1">DNA-dependent RNA polymerase catalyzes the transcription of DNA into RNA using the four ribonucleoside triphosphates as substrates.</text>
</comment>
<comment type="catalytic activity">
    <reaction evidence="1">
        <text>RNA(n) + a ribonucleoside 5'-triphosphate = RNA(n+1) + diphosphate</text>
        <dbReference type="Rhea" id="RHEA:21248"/>
        <dbReference type="Rhea" id="RHEA-COMP:14527"/>
        <dbReference type="Rhea" id="RHEA-COMP:17342"/>
        <dbReference type="ChEBI" id="CHEBI:33019"/>
        <dbReference type="ChEBI" id="CHEBI:61557"/>
        <dbReference type="ChEBI" id="CHEBI:140395"/>
        <dbReference type="EC" id="2.7.7.6"/>
    </reaction>
</comment>
<comment type="cofactor">
    <cofactor evidence="1">
        <name>Mg(2+)</name>
        <dbReference type="ChEBI" id="CHEBI:18420"/>
    </cofactor>
    <text evidence="1">Binds 1 Mg(2+) ion per subunit.</text>
</comment>
<comment type="cofactor">
    <cofactor evidence="1">
        <name>Zn(2+)</name>
        <dbReference type="ChEBI" id="CHEBI:29105"/>
    </cofactor>
    <text evidence="1">Binds 2 Zn(2+) ions per subunit.</text>
</comment>
<comment type="subunit">
    <text evidence="1">The RNAP catalytic core consists of 2 alpha, 1 beta, 1 beta' and 1 omega subunit. When a sigma factor is associated with the core the holoenzyme is formed, which can initiate transcription.</text>
</comment>
<comment type="similarity">
    <text evidence="1">Belongs to the RNA polymerase beta' chain family.</text>
</comment>
<accession>A7FZ76</accession>
<dbReference type="EC" id="2.7.7.6" evidence="1"/>
<dbReference type="EMBL" id="CP000726">
    <property type="protein sequence ID" value="ABS35533.1"/>
    <property type="molecule type" value="Genomic_DNA"/>
</dbReference>
<dbReference type="RefSeq" id="WP_012048356.1">
    <property type="nucleotide sequence ID" value="NC_009697.1"/>
</dbReference>
<dbReference type="SMR" id="A7FZ76"/>
<dbReference type="GeneID" id="5187652"/>
<dbReference type="KEGG" id="cba:CLB_3544"/>
<dbReference type="HOGENOM" id="CLU_000524_3_1_9"/>
<dbReference type="GO" id="GO:0000428">
    <property type="term" value="C:DNA-directed RNA polymerase complex"/>
    <property type="evidence" value="ECO:0007669"/>
    <property type="project" value="UniProtKB-KW"/>
</dbReference>
<dbReference type="GO" id="GO:0003677">
    <property type="term" value="F:DNA binding"/>
    <property type="evidence" value="ECO:0007669"/>
    <property type="project" value="UniProtKB-UniRule"/>
</dbReference>
<dbReference type="GO" id="GO:0003899">
    <property type="term" value="F:DNA-directed RNA polymerase activity"/>
    <property type="evidence" value="ECO:0007669"/>
    <property type="project" value="UniProtKB-UniRule"/>
</dbReference>
<dbReference type="GO" id="GO:0000287">
    <property type="term" value="F:magnesium ion binding"/>
    <property type="evidence" value="ECO:0007669"/>
    <property type="project" value="UniProtKB-UniRule"/>
</dbReference>
<dbReference type="GO" id="GO:0008270">
    <property type="term" value="F:zinc ion binding"/>
    <property type="evidence" value="ECO:0007669"/>
    <property type="project" value="UniProtKB-UniRule"/>
</dbReference>
<dbReference type="GO" id="GO:0006351">
    <property type="term" value="P:DNA-templated transcription"/>
    <property type="evidence" value="ECO:0007669"/>
    <property type="project" value="UniProtKB-UniRule"/>
</dbReference>
<dbReference type="CDD" id="cd02655">
    <property type="entry name" value="RNAP_beta'_C"/>
    <property type="match status" value="1"/>
</dbReference>
<dbReference type="CDD" id="cd01609">
    <property type="entry name" value="RNAP_beta'_N"/>
    <property type="match status" value="1"/>
</dbReference>
<dbReference type="FunFam" id="1.10.150.390:FF:000002">
    <property type="entry name" value="DNA-directed RNA polymerase subunit beta"/>
    <property type="match status" value="1"/>
</dbReference>
<dbReference type="FunFam" id="1.10.40.90:FF:000001">
    <property type="entry name" value="DNA-directed RNA polymerase subunit beta"/>
    <property type="match status" value="1"/>
</dbReference>
<dbReference type="FunFam" id="4.10.860.120:FF:000001">
    <property type="entry name" value="DNA-directed RNA polymerase subunit beta"/>
    <property type="match status" value="1"/>
</dbReference>
<dbReference type="Gene3D" id="1.10.132.30">
    <property type="match status" value="1"/>
</dbReference>
<dbReference type="Gene3D" id="1.10.150.390">
    <property type="match status" value="1"/>
</dbReference>
<dbReference type="Gene3D" id="1.10.1790.20">
    <property type="match status" value="1"/>
</dbReference>
<dbReference type="Gene3D" id="1.10.40.90">
    <property type="match status" value="1"/>
</dbReference>
<dbReference type="Gene3D" id="2.40.40.20">
    <property type="match status" value="1"/>
</dbReference>
<dbReference type="Gene3D" id="2.40.50.100">
    <property type="match status" value="1"/>
</dbReference>
<dbReference type="Gene3D" id="4.10.860.120">
    <property type="entry name" value="RNA polymerase II, clamp domain"/>
    <property type="match status" value="1"/>
</dbReference>
<dbReference type="Gene3D" id="1.10.274.100">
    <property type="entry name" value="RNA polymerase Rpb1, domain 3"/>
    <property type="match status" value="1"/>
</dbReference>
<dbReference type="HAMAP" id="MF_01322">
    <property type="entry name" value="RNApol_bact_RpoC"/>
    <property type="match status" value="1"/>
</dbReference>
<dbReference type="InterPro" id="IPR045867">
    <property type="entry name" value="DNA-dir_RpoC_beta_prime"/>
</dbReference>
<dbReference type="InterPro" id="IPR012754">
    <property type="entry name" value="DNA-dir_RpoC_beta_prime_bact"/>
</dbReference>
<dbReference type="InterPro" id="IPR000722">
    <property type="entry name" value="RNA_pol_asu"/>
</dbReference>
<dbReference type="InterPro" id="IPR006592">
    <property type="entry name" value="RNA_pol_N"/>
</dbReference>
<dbReference type="InterPro" id="IPR007080">
    <property type="entry name" value="RNA_pol_Rpb1_1"/>
</dbReference>
<dbReference type="InterPro" id="IPR007066">
    <property type="entry name" value="RNA_pol_Rpb1_3"/>
</dbReference>
<dbReference type="InterPro" id="IPR042102">
    <property type="entry name" value="RNA_pol_Rpb1_3_sf"/>
</dbReference>
<dbReference type="InterPro" id="IPR007083">
    <property type="entry name" value="RNA_pol_Rpb1_4"/>
</dbReference>
<dbReference type="InterPro" id="IPR007081">
    <property type="entry name" value="RNA_pol_Rpb1_5"/>
</dbReference>
<dbReference type="InterPro" id="IPR044893">
    <property type="entry name" value="RNA_pol_Rpb1_clamp_domain"/>
</dbReference>
<dbReference type="InterPro" id="IPR038120">
    <property type="entry name" value="Rpb1_funnel_sf"/>
</dbReference>
<dbReference type="NCBIfam" id="NF011498">
    <property type="entry name" value="PRK14906.1"/>
    <property type="match status" value="1"/>
</dbReference>
<dbReference type="NCBIfam" id="TIGR02386">
    <property type="entry name" value="rpoC_TIGR"/>
    <property type="match status" value="1"/>
</dbReference>
<dbReference type="PANTHER" id="PTHR19376">
    <property type="entry name" value="DNA-DIRECTED RNA POLYMERASE"/>
    <property type="match status" value="1"/>
</dbReference>
<dbReference type="PANTHER" id="PTHR19376:SF54">
    <property type="entry name" value="DNA-DIRECTED RNA POLYMERASE SUBUNIT BETA"/>
    <property type="match status" value="1"/>
</dbReference>
<dbReference type="Pfam" id="PF04997">
    <property type="entry name" value="RNA_pol_Rpb1_1"/>
    <property type="match status" value="1"/>
</dbReference>
<dbReference type="Pfam" id="PF00623">
    <property type="entry name" value="RNA_pol_Rpb1_2"/>
    <property type="match status" value="2"/>
</dbReference>
<dbReference type="Pfam" id="PF04983">
    <property type="entry name" value="RNA_pol_Rpb1_3"/>
    <property type="match status" value="1"/>
</dbReference>
<dbReference type="Pfam" id="PF05000">
    <property type="entry name" value="RNA_pol_Rpb1_4"/>
    <property type="match status" value="1"/>
</dbReference>
<dbReference type="Pfam" id="PF04998">
    <property type="entry name" value="RNA_pol_Rpb1_5"/>
    <property type="match status" value="1"/>
</dbReference>
<dbReference type="SMART" id="SM00663">
    <property type="entry name" value="RPOLA_N"/>
    <property type="match status" value="1"/>
</dbReference>
<dbReference type="SUPFAM" id="SSF64484">
    <property type="entry name" value="beta and beta-prime subunits of DNA dependent RNA-polymerase"/>
    <property type="match status" value="1"/>
</dbReference>